<comment type="function">
    <text evidence="1">Catalyzes the last of the four reactions of the long-chain fatty acids elongation cycle. This endoplasmic reticulum-bound enzymatic process, allows the addition of 2 carbons to the chain of long- and very long-chain fatty acids/VLCFAs per cycle. This enzyme reduces the trans-2,3-enoyl-CoA fatty acid intermediate to an acyl-CoA that can be further elongated by entering a new cycle of elongation. Thereby, it participates in the production of VLCFAs of different chain lengths that are involved in multiple biological processes as precursors of membrane lipids and lipid mediators.</text>
</comment>
<comment type="catalytic activity">
    <reaction evidence="1">
        <text>a very-long-chain 2,3-saturated fatty acyl-CoA + NADP(+) = a very-long-chain (2E)-enoyl-CoA + NADPH + H(+)</text>
        <dbReference type="Rhea" id="RHEA:14473"/>
        <dbReference type="ChEBI" id="CHEBI:15378"/>
        <dbReference type="ChEBI" id="CHEBI:57783"/>
        <dbReference type="ChEBI" id="CHEBI:58349"/>
        <dbReference type="ChEBI" id="CHEBI:83724"/>
        <dbReference type="ChEBI" id="CHEBI:83728"/>
        <dbReference type="EC" id="1.3.1.93"/>
    </reaction>
</comment>
<comment type="pathway">
    <text evidence="1">Lipid metabolism; fatty acid biosynthesis.</text>
</comment>
<comment type="subcellular location">
    <subcellularLocation>
        <location evidence="1">Endoplasmic reticulum membrane</location>
        <topology evidence="1">Multi-pass membrane protein</topology>
    </subcellularLocation>
</comment>
<comment type="similarity">
    <text evidence="3">Belongs to the steroid 5-alpha reductase family.</text>
</comment>
<dbReference type="EC" id="1.3.1.93" evidence="1"/>
<dbReference type="EMBL" id="AAFI02000005">
    <property type="protein sequence ID" value="EAL72485.1"/>
    <property type="molecule type" value="Genomic_DNA"/>
</dbReference>
<dbReference type="RefSeq" id="XP_646664.1">
    <property type="nucleotide sequence ID" value="XM_641572.1"/>
</dbReference>
<dbReference type="SMR" id="Q55C17"/>
<dbReference type="FunCoup" id="Q55C17">
    <property type="interactions" value="426"/>
</dbReference>
<dbReference type="STRING" id="44689.Q55C17"/>
<dbReference type="GlyCosmos" id="Q55C17">
    <property type="glycosylation" value="2 sites, No reported glycans"/>
</dbReference>
<dbReference type="GlyGen" id="Q55C17">
    <property type="glycosylation" value="2 sites"/>
</dbReference>
<dbReference type="PaxDb" id="44689-DDB0237530"/>
<dbReference type="EnsemblProtists" id="EAL72485">
    <property type="protein sequence ID" value="EAL72485"/>
    <property type="gene ID" value="DDB_G0270270"/>
</dbReference>
<dbReference type="GeneID" id="8617636"/>
<dbReference type="KEGG" id="ddi:DDB_G0270270"/>
<dbReference type="dictyBase" id="DDB_G0270270">
    <property type="gene designation" value="gpsn2"/>
</dbReference>
<dbReference type="VEuPathDB" id="AmoebaDB:DDB_G0270270"/>
<dbReference type="eggNOG" id="KOG1639">
    <property type="taxonomic scope" value="Eukaryota"/>
</dbReference>
<dbReference type="HOGENOM" id="CLU_059260_0_0_1"/>
<dbReference type="InParanoid" id="Q55C17"/>
<dbReference type="OMA" id="ATMPIFN"/>
<dbReference type="PhylomeDB" id="Q55C17"/>
<dbReference type="Reactome" id="R-DDI-75876">
    <property type="pathway name" value="Synthesis of very long-chain fatty acyl-CoAs"/>
</dbReference>
<dbReference type="UniPathway" id="UPA00094"/>
<dbReference type="PRO" id="PR:Q55C17"/>
<dbReference type="Proteomes" id="UP000002195">
    <property type="component" value="Chromosome 1"/>
</dbReference>
<dbReference type="GO" id="GO:0005789">
    <property type="term" value="C:endoplasmic reticulum membrane"/>
    <property type="evidence" value="ECO:0000250"/>
    <property type="project" value="UniProtKB"/>
</dbReference>
<dbReference type="GO" id="GO:0016491">
    <property type="term" value="F:oxidoreductase activity"/>
    <property type="evidence" value="ECO:0000318"/>
    <property type="project" value="GO_Central"/>
</dbReference>
<dbReference type="GO" id="GO:0102758">
    <property type="term" value="F:very-long-chain enoyl-CoA reductase activity"/>
    <property type="evidence" value="ECO:0007669"/>
    <property type="project" value="UniProtKB-EC"/>
</dbReference>
<dbReference type="GO" id="GO:0030497">
    <property type="term" value="P:fatty acid elongation"/>
    <property type="evidence" value="ECO:0000250"/>
    <property type="project" value="UniProtKB"/>
</dbReference>
<dbReference type="GO" id="GO:0006694">
    <property type="term" value="P:steroid biosynthetic process"/>
    <property type="evidence" value="ECO:0007669"/>
    <property type="project" value="UniProtKB-KW"/>
</dbReference>
<dbReference type="GO" id="GO:0042761">
    <property type="term" value="P:very long-chain fatty acid biosynthetic process"/>
    <property type="evidence" value="ECO:0000250"/>
    <property type="project" value="UniProtKB"/>
</dbReference>
<dbReference type="FunFam" id="1.20.120.1630:FF:000010">
    <property type="entry name" value="Steroid alpha reductase family protein"/>
    <property type="match status" value="1"/>
</dbReference>
<dbReference type="Gene3D" id="1.20.120.1630">
    <property type="match status" value="1"/>
</dbReference>
<dbReference type="Gene3D" id="3.10.20.90">
    <property type="entry name" value="Phosphatidylinositol 3-kinase Catalytic Subunit, Chain A, domain 1"/>
    <property type="match status" value="1"/>
</dbReference>
<dbReference type="InterPro" id="IPR001104">
    <property type="entry name" value="3-oxo-5_a-steroid_4-DH_C"/>
</dbReference>
<dbReference type="InterPro" id="IPR039357">
    <property type="entry name" value="SRD5A/TECR"/>
</dbReference>
<dbReference type="PANTHER" id="PTHR10556">
    <property type="entry name" value="3-OXO-5-ALPHA-STEROID 4-DEHYDROGENASE"/>
    <property type="match status" value="1"/>
</dbReference>
<dbReference type="PANTHER" id="PTHR10556:SF28">
    <property type="entry name" value="VERY-LONG-CHAIN ENOYL-COA REDUCTASE"/>
    <property type="match status" value="1"/>
</dbReference>
<dbReference type="Pfam" id="PF02544">
    <property type="entry name" value="Steroid_dh"/>
    <property type="match status" value="1"/>
</dbReference>
<dbReference type="PROSITE" id="PS50244">
    <property type="entry name" value="S5A_REDUCTASE"/>
    <property type="match status" value="1"/>
</dbReference>
<organism>
    <name type="scientific">Dictyostelium discoideum</name>
    <name type="common">Social amoeba</name>
    <dbReference type="NCBI Taxonomy" id="44689"/>
    <lineage>
        <taxon>Eukaryota</taxon>
        <taxon>Amoebozoa</taxon>
        <taxon>Evosea</taxon>
        <taxon>Eumycetozoa</taxon>
        <taxon>Dictyostelia</taxon>
        <taxon>Dictyosteliales</taxon>
        <taxon>Dictyosteliaceae</taxon>
        <taxon>Dictyostelium</taxon>
    </lineage>
</organism>
<proteinExistence type="inferred from homology"/>
<keyword id="KW-0256">Endoplasmic reticulum</keyword>
<keyword id="KW-0275">Fatty acid biosynthesis</keyword>
<keyword id="KW-0276">Fatty acid metabolism</keyword>
<keyword id="KW-0325">Glycoprotein</keyword>
<keyword id="KW-0444">Lipid biosynthesis</keyword>
<keyword id="KW-0443">Lipid metabolism</keyword>
<keyword id="KW-0472">Membrane</keyword>
<keyword id="KW-0521">NADP</keyword>
<keyword id="KW-0560">Oxidoreductase</keyword>
<keyword id="KW-1185">Reference proteome</keyword>
<keyword id="KW-0752">Steroid biosynthesis</keyword>
<keyword id="KW-0812">Transmembrane</keyword>
<keyword id="KW-1133">Transmembrane helix</keyword>
<evidence type="ECO:0000250" key="1">
    <source>
        <dbReference type="UniProtKB" id="Q9NZ01"/>
    </source>
</evidence>
<evidence type="ECO:0000255" key="2"/>
<evidence type="ECO:0000305" key="3"/>
<reference key="1">
    <citation type="journal article" date="2005" name="Nature">
        <title>The genome of the social amoeba Dictyostelium discoideum.</title>
        <authorList>
            <person name="Eichinger L."/>
            <person name="Pachebat J.A."/>
            <person name="Gloeckner G."/>
            <person name="Rajandream M.A."/>
            <person name="Sucgang R."/>
            <person name="Berriman M."/>
            <person name="Song J."/>
            <person name="Olsen R."/>
            <person name="Szafranski K."/>
            <person name="Xu Q."/>
            <person name="Tunggal B."/>
            <person name="Kummerfeld S."/>
            <person name="Madera M."/>
            <person name="Konfortov B.A."/>
            <person name="Rivero F."/>
            <person name="Bankier A.T."/>
            <person name="Lehmann R."/>
            <person name="Hamlin N."/>
            <person name="Davies R."/>
            <person name="Gaudet P."/>
            <person name="Fey P."/>
            <person name="Pilcher K."/>
            <person name="Chen G."/>
            <person name="Saunders D."/>
            <person name="Sodergren E.J."/>
            <person name="Davis P."/>
            <person name="Kerhornou A."/>
            <person name="Nie X."/>
            <person name="Hall N."/>
            <person name="Anjard C."/>
            <person name="Hemphill L."/>
            <person name="Bason N."/>
            <person name="Farbrother P."/>
            <person name="Desany B."/>
            <person name="Just E."/>
            <person name="Morio T."/>
            <person name="Rost R."/>
            <person name="Churcher C.M."/>
            <person name="Cooper J."/>
            <person name="Haydock S."/>
            <person name="van Driessche N."/>
            <person name="Cronin A."/>
            <person name="Goodhead I."/>
            <person name="Muzny D.M."/>
            <person name="Mourier T."/>
            <person name="Pain A."/>
            <person name="Lu M."/>
            <person name="Harper D."/>
            <person name="Lindsay R."/>
            <person name="Hauser H."/>
            <person name="James K.D."/>
            <person name="Quiles M."/>
            <person name="Madan Babu M."/>
            <person name="Saito T."/>
            <person name="Buchrieser C."/>
            <person name="Wardroper A."/>
            <person name="Felder M."/>
            <person name="Thangavelu M."/>
            <person name="Johnson D."/>
            <person name="Knights A."/>
            <person name="Loulseged H."/>
            <person name="Mungall K.L."/>
            <person name="Oliver K."/>
            <person name="Price C."/>
            <person name="Quail M.A."/>
            <person name="Urushihara H."/>
            <person name="Hernandez J."/>
            <person name="Rabbinowitsch E."/>
            <person name="Steffen D."/>
            <person name="Sanders M."/>
            <person name="Ma J."/>
            <person name="Kohara Y."/>
            <person name="Sharp S."/>
            <person name="Simmonds M.N."/>
            <person name="Spiegler S."/>
            <person name="Tivey A."/>
            <person name="Sugano S."/>
            <person name="White B."/>
            <person name="Walker D."/>
            <person name="Woodward J.R."/>
            <person name="Winckler T."/>
            <person name="Tanaka Y."/>
            <person name="Shaulsky G."/>
            <person name="Schleicher M."/>
            <person name="Weinstock G.M."/>
            <person name="Rosenthal A."/>
            <person name="Cox E.C."/>
            <person name="Chisholm R.L."/>
            <person name="Gibbs R.A."/>
            <person name="Loomis W.F."/>
            <person name="Platzer M."/>
            <person name="Kay R.R."/>
            <person name="Williams J.G."/>
            <person name="Dear P.H."/>
            <person name="Noegel A.A."/>
            <person name="Barrell B.G."/>
            <person name="Kuspa A."/>
        </authorList>
    </citation>
    <scope>NUCLEOTIDE SEQUENCE [LARGE SCALE GENOMIC DNA]</scope>
    <source>
        <strain>AX4</strain>
    </source>
</reference>
<feature type="chain" id="PRO_0000328151" description="Very-long-chain enoyl-CoA reductase">
    <location>
        <begin position="1"/>
        <end position="300"/>
    </location>
</feature>
<feature type="transmembrane region" description="Helical" evidence="2">
    <location>
        <begin position="91"/>
        <end position="111"/>
    </location>
</feature>
<feature type="transmembrane region" description="Helical" evidence="2">
    <location>
        <begin position="191"/>
        <end position="211"/>
    </location>
</feature>
<feature type="transmembrane region" description="Helical" evidence="2">
    <location>
        <begin position="243"/>
        <end position="263"/>
    </location>
</feature>
<feature type="glycosylation site" description="N-linked (GlcNAc...) asparagine" evidence="2">
    <location>
        <position position="163"/>
    </location>
</feature>
<feature type="glycosylation site" description="N-linked (GlcNAc...) asparagine" evidence="2">
    <location>
        <position position="238"/>
    </location>
</feature>
<accession>Q55C17</accession>
<sequence>MVDIKVVSQRSKKEVGSFSTSSSTTVGELKKQISSKTRLGTERIRLAVPSKTSKLPNAFEALGKDSDLVSKHVGADSTLYFKDLGPQISWSLVFICEYAGPLFVYPIFYFLSNLIYGTDSPKSFAQKVALVCYSLHYIKRIYETIFVHRFSHGTMPIFNLFKNCSYYWGCTAMVSYFVNHPLYTEAPIERVYLGLGLWIIGEVFNYICHIQLRNLRPAGSTERKIPRGLLFEFVSCPNYTVEILSWIGFSILTQTLTSWIFALMGAAQMWIWAVGKHRRYRKEFGDKYPKSRKILIPFLL</sequence>
<gene>
    <name type="primary">gpsn2</name>
    <name type="ORF">DDB_G0270270</name>
</gene>
<name>TECR_DICDI</name>
<protein>
    <recommendedName>
        <fullName evidence="3">Very-long-chain enoyl-CoA reductase</fullName>
        <ecNumber evidence="1">1.3.1.93</ecNumber>
    </recommendedName>
    <alternativeName>
        <fullName>Synaptic glycoprotein SC2-like protein</fullName>
    </alternativeName>
    <alternativeName>
        <fullName>Trans-2,3-enoyl-CoA reductase</fullName>
        <shortName>TER</shortName>
    </alternativeName>
</protein>